<comment type="function">
    <text evidence="1">Catalyzes the ATP-dependent phosphorylation of N-acetyl-L-glutamate.</text>
</comment>
<comment type="catalytic activity">
    <reaction evidence="1">
        <text>N-acetyl-L-glutamate + ATP = N-acetyl-L-glutamyl 5-phosphate + ADP</text>
        <dbReference type="Rhea" id="RHEA:14629"/>
        <dbReference type="ChEBI" id="CHEBI:30616"/>
        <dbReference type="ChEBI" id="CHEBI:44337"/>
        <dbReference type="ChEBI" id="CHEBI:57936"/>
        <dbReference type="ChEBI" id="CHEBI:456216"/>
        <dbReference type="EC" id="2.7.2.8"/>
    </reaction>
</comment>
<comment type="pathway">
    <text evidence="1">Amino-acid biosynthesis; L-arginine biosynthesis; N(2)-acetyl-L-ornithine from L-glutamate: step 2/4.</text>
</comment>
<comment type="subcellular location">
    <subcellularLocation>
        <location evidence="1">Cytoplasm</location>
    </subcellularLocation>
</comment>
<comment type="similarity">
    <text evidence="1">Belongs to the acetylglutamate kinase family. ArgB subfamily.</text>
</comment>
<proteinExistence type="inferred from homology"/>
<name>ARGB_BACCR</name>
<feature type="chain" id="PRO_0000112579" description="Acetylglutamate kinase">
    <location>
        <begin position="1"/>
        <end position="255"/>
    </location>
</feature>
<feature type="binding site" evidence="1">
    <location>
        <begin position="40"/>
        <end position="41"/>
    </location>
    <ligand>
        <name>substrate</name>
    </ligand>
</feature>
<feature type="binding site" evidence="1">
    <location>
        <position position="62"/>
    </location>
    <ligand>
        <name>substrate</name>
    </ligand>
</feature>
<feature type="binding site" evidence="1">
    <location>
        <position position="153"/>
    </location>
    <ligand>
        <name>substrate</name>
    </ligand>
</feature>
<feature type="site" description="Transition state stabilizer" evidence="1">
    <location>
        <position position="8"/>
    </location>
</feature>
<feature type="site" description="Transition state stabilizer" evidence="1">
    <location>
        <position position="212"/>
    </location>
</feature>
<evidence type="ECO:0000255" key="1">
    <source>
        <dbReference type="HAMAP-Rule" id="MF_00082"/>
    </source>
</evidence>
<reference key="1">
    <citation type="journal article" date="2003" name="Nature">
        <title>Genome sequence of Bacillus cereus and comparative analysis with Bacillus anthracis.</title>
        <authorList>
            <person name="Ivanova N."/>
            <person name="Sorokin A."/>
            <person name="Anderson I."/>
            <person name="Galleron N."/>
            <person name="Candelon B."/>
            <person name="Kapatral V."/>
            <person name="Bhattacharyya A."/>
            <person name="Reznik G."/>
            <person name="Mikhailova N."/>
            <person name="Lapidus A."/>
            <person name="Chu L."/>
            <person name="Mazur M."/>
            <person name="Goltsman E."/>
            <person name="Larsen N."/>
            <person name="D'Souza M."/>
            <person name="Walunas T."/>
            <person name="Grechkin Y."/>
            <person name="Pusch G."/>
            <person name="Haselkorn R."/>
            <person name="Fonstein M."/>
            <person name="Ehrlich S.D."/>
            <person name="Overbeek R."/>
            <person name="Kyrpides N.C."/>
        </authorList>
    </citation>
    <scope>NUCLEOTIDE SEQUENCE [LARGE SCALE GENOMIC DNA]</scope>
    <source>
        <strain>ATCC 14579 / DSM 31 / CCUG 7414 / JCM 2152 / NBRC 15305 / NCIMB 9373 / NCTC 2599 / NRRL B-3711</strain>
    </source>
</reference>
<organism>
    <name type="scientific">Bacillus cereus (strain ATCC 14579 / DSM 31 / CCUG 7414 / JCM 2152 / NBRC 15305 / NCIMB 9373 / NCTC 2599 / NRRL B-3711)</name>
    <dbReference type="NCBI Taxonomy" id="226900"/>
    <lineage>
        <taxon>Bacteria</taxon>
        <taxon>Bacillati</taxon>
        <taxon>Bacillota</taxon>
        <taxon>Bacilli</taxon>
        <taxon>Bacillales</taxon>
        <taxon>Bacillaceae</taxon>
        <taxon>Bacillus</taxon>
        <taxon>Bacillus cereus group</taxon>
    </lineage>
</organism>
<accession>Q818W1</accession>
<dbReference type="EC" id="2.7.2.8" evidence="1"/>
<dbReference type="EMBL" id="AE016877">
    <property type="protein sequence ID" value="AAP11046.1"/>
    <property type="molecule type" value="Genomic_DNA"/>
</dbReference>
<dbReference type="RefSeq" id="NP_833845.1">
    <property type="nucleotide sequence ID" value="NC_004722.1"/>
</dbReference>
<dbReference type="RefSeq" id="WP_001286797.1">
    <property type="nucleotide sequence ID" value="NZ_CP138336.1"/>
</dbReference>
<dbReference type="SMR" id="Q818W1"/>
<dbReference type="STRING" id="226900.BC_4128"/>
<dbReference type="KEGG" id="bce:BC4128"/>
<dbReference type="PATRIC" id="fig|226900.8.peg.4266"/>
<dbReference type="HOGENOM" id="CLU_053680_1_0_9"/>
<dbReference type="OrthoDB" id="9803155at2"/>
<dbReference type="UniPathway" id="UPA00068">
    <property type="reaction ID" value="UER00107"/>
</dbReference>
<dbReference type="Proteomes" id="UP000001417">
    <property type="component" value="Chromosome"/>
</dbReference>
<dbReference type="GO" id="GO:0005737">
    <property type="term" value="C:cytoplasm"/>
    <property type="evidence" value="ECO:0007669"/>
    <property type="project" value="UniProtKB-SubCell"/>
</dbReference>
<dbReference type="GO" id="GO:0003991">
    <property type="term" value="F:acetylglutamate kinase activity"/>
    <property type="evidence" value="ECO:0000318"/>
    <property type="project" value="GO_Central"/>
</dbReference>
<dbReference type="GO" id="GO:0005524">
    <property type="term" value="F:ATP binding"/>
    <property type="evidence" value="ECO:0007669"/>
    <property type="project" value="UniProtKB-UniRule"/>
</dbReference>
<dbReference type="GO" id="GO:0042450">
    <property type="term" value="P:arginine biosynthetic process via ornithine"/>
    <property type="evidence" value="ECO:0007669"/>
    <property type="project" value="UniProtKB-UniRule"/>
</dbReference>
<dbReference type="GO" id="GO:0006526">
    <property type="term" value="P:L-arginine biosynthetic process"/>
    <property type="evidence" value="ECO:0000318"/>
    <property type="project" value="GO_Central"/>
</dbReference>
<dbReference type="CDD" id="cd04238">
    <property type="entry name" value="AAK_NAGK-like"/>
    <property type="match status" value="1"/>
</dbReference>
<dbReference type="FunFam" id="3.40.1160.10:FF:000034">
    <property type="entry name" value="Acetylglutamate kinase"/>
    <property type="match status" value="1"/>
</dbReference>
<dbReference type="Gene3D" id="3.40.1160.10">
    <property type="entry name" value="Acetylglutamate kinase-like"/>
    <property type="match status" value="1"/>
</dbReference>
<dbReference type="HAMAP" id="MF_00082">
    <property type="entry name" value="ArgB"/>
    <property type="match status" value="1"/>
</dbReference>
<dbReference type="InterPro" id="IPR036393">
    <property type="entry name" value="AceGlu_kinase-like_sf"/>
</dbReference>
<dbReference type="InterPro" id="IPR004662">
    <property type="entry name" value="AcgluKinase_fam"/>
</dbReference>
<dbReference type="InterPro" id="IPR037528">
    <property type="entry name" value="ArgB"/>
</dbReference>
<dbReference type="InterPro" id="IPR001048">
    <property type="entry name" value="Asp/Glu/Uridylate_kinase"/>
</dbReference>
<dbReference type="NCBIfam" id="TIGR00761">
    <property type="entry name" value="argB"/>
    <property type="match status" value="1"/>
</dbReference>
<dbReference type="PANTHER" id="PTHR23342">
    <property type="entry name" value="N-ACETYLGLUTAMATE SYNTHASE"/>
    <property type="match status" value="1"/>
</dbReference>
<dbReference type="PANTHER" id="PTHR23342:SF0">
    <property type="entry name" value="N-ACETYLGLUTAMATE SYNTHASE, MITOCHONDRIAL"/>
    <property type="match status" value="1"/>
</dbReference>
<dbReference type="Pfam" id="PF00696">
    <property type="entry name" value="AA_kinase"/>
    <property type="match status" value="1"/>
</dbReference>
<dbReference type="PIRSF" id="PIRSF000728">
    <property type="entry name" value="NAGK"/>
    <property type="match status" value="1"/>
</dbReference>
<dbReference type="PRINTS" id="PR01469">
    <property type="entry name" value="CARBMTKINASE"/>
</dbReference>
<dbReference type="SUPFAM" id="SSF53633">
    <property type="entry name" value="Carbamate kinase-like"/>
    <property type="match status" value="1"/>
</dbReference>
<protein>
    <recommendedName>
        <fullName evidence="1">Acetylglutamate kinase</fullName>
        <ecNumber evidence="1">2.7.2.8</ecNumber>
    </recommendedName>
    <alternativeName>
        <fullName evidence="1">N-acetyl-L-glutamate 5-phosphotransferase</fullName>
    </alternativeName>
    <alternativeName>
        <fullName evidence="1">NAG kinase</fullName>
        <shortName evidence="1">NAGK</shortName>
    </alternativeName>
</protein>
<gene>
    <name evidence="1" type="primary">argB</name>
    <name type="ordered locus">BC_4128</name>
</gene>
<sequence>MSDYIVVKCGGSMLNQLNDVFFECIKKLQQKYKVVIVHGGGPEIDAKLKDCNINVEKRDGLRITPKEVMDVVQMVLCGSTNKKLVMNLQKHNLLAVGCSGCDGNLLQIQPVSEEIGYVGEVSYVETALLKGLINMEYIPVIAPIGVNGNEIYNINADNAAAGIAAALGAKELVFITDVDGILHEGNLVKETDESEIATFIETGVITGGMIPKVQAALASLKMGVQKISIVNGTKDFTEVTGECIGTTVTKGVSIA</sequence>
<keyword id="KW-0028">Amino-acid biosynthesis</keyword>
<keyword id="KW-0055">Arginine biosynthesis</keyword>
<keyword id="KW-0067">ATP-binding</keyword>
<keyword id="KW-0963">Cytoplasm</keyword>
<keyword id="KW-0418">Kinase</keyword>
<keyword id="KW-0547">Nucleotide-binding</keyword>
<keyword id="KW-1185">Reference proteome</keyword>
<keyword id="KW-0808">Transferase</keyword>